<organism>
    <name type="scientific">Pseudothermotoga lettingae (strain ATCC BAA-301 / DSM 14385 / NBRC 107922 / TMO)</name>
    <name type="common">Thermotoga lettingae</name>
    <dbReference type="NCBI Taxonomy" id="416591"/>
    <lineage>
        <taxon>Bacteria</taxon>
        <taxon>Thermotogati</taxon>
        <taxon>Thermotogota</taxon>
        <taxon>Thermotogae</taxon>
        <taxon>Thermotogales</taxon>
        <taxon>Thermotogaceae</taxon>
        <taxon>Pseudothermotoga</taxon>
    </lineage>
</organism>
<evidence type="ECO:0000255" key="1">
    <source>
        <dbReference type="HAMAP-Rule" id="MF_01320"/>
    </source>
</evidence>
<evidence type="ECO:0000256" key="2">
    <source>
        <dbReference type="SAM" id="MobiDB-lite"/>
    </source>
</evidence>
<evidence type="ECO:0000305" key="3"/>
<protein>
    <recommendedName>
        <fullName evidence="1">Large ribosomal subunit protein uL2</fullName>
    </recommendedName>
    <alternativeName>
        <fullName evidence="3">50S ribosomal protein L2</fullName>
    </alternativeName>
</protein>
<dbReference type="EMBL" id="CP000812">
    <property type="protein sequence ID" value="ABV33148.1"/>
    <property type="molecule type" value="Genomic_DNA"/>
</dbReference>
<dbReference type="RefSeq" id="WP_012002629.1">
    <property type="nucleotide sequence ID" value="NZ_BSDV01000001.1"/>
</dbReference>
<dbReference type="SMR" id="A8F4R4"/>
<dbReference type="STRING" id="416591.Tlet_0582"/>
<dbReference type="KEGG" id="tle:Tlet_0582"/>
<dbReference type="eggNOG" id="COG0090">
    <property type="taxonomic scope" value="Bacteria"/>
</dbReference>
<dbReference type="HOGENOM" id="CLU_036235_2_1_0"/>
<dbReference type="OrthoDB" id="9778722at2"/>
<dbReference type="Proteomes" id="UP000002016">
    <property type="component" value="Chromosome"/>
</dbReference>
<dbReference type="GO" id="GO:0015934">
    <property type="term" value="C:large ribosomal subunit"/>
    <property type="evidence" value="ECO:0007669"/>
    <property type="project" value="InterPro"/>
</dbReference>
<dbReference type="GO" id="GO:0019843">
    <property type="term" value="F:rRNA binding"/>
    <property type="evidence" value="ECO:0007669"/>
    <property type="project" value="UniProtKB-UniRule"/>
</dbReference>
<dbReference type="GO" id="GO:0003735">
    <property type="term" value="F:structural constituent of ribosome"/>
    <property type="evidence" value="ECO:0007669"/>
    <property type="project" value="InterPro"/>
</dbReference>
<dbReference type="GO" id="GO:0016740">
    <property type="term" value="F:transferase activity"/>
    <property type="evidence" value="ECO:0007669"/>
    <property type="project" value="InterPro"/>
</dbReference>
<dbReference type="GO" id="GO:0002181">
    <property type="term" value="P:cytoplasmic translation"/>
    <property type="evidence" value="ECO:0007669"/>
    <property type="project" value="TreeGrafter"/>
</dbReference>
<dbReference type="FunFam" id="2.30.30.30:FF:000001">
    <property type="entry name" value="50S ribosomal protein L2"/>
    <property type="match status" value="1"/>
</dbReference>
<dbReference type="FunFam" id="2.40.50.140:FF:000003">
    <property type="entry name" value="50S ribosomal protein L2"/>
    <property type="match status" value="1"/>
</dbReference>
<dbReference type="FunFam" id="4.10.950.10:FF:000001">
    <property type="entry name" value="50S ribosomal protein L2"/>
    <property type="match status" value="1"/>
</dbReference>
<dbReference type="Gene3D" id="2.30.30.30">
    <property type="match status" value="1"/>
</dbReference>
<dbReference type="Gene3D" id="2.40.50.140">
    <property type="entry name" value="Nucleic acid-binding proteins"/>
    <property type="match status" value="1"/>
</dbReference>
<dbReference type="Gene3D" id="4.10.950.10">
    <property type="entry name" value="Ribosomal protein L2, domain 3"/>
    <property type="match status" value="1"/>
</dbReference>
<dbReference type="HAMAP" id="MF_01320_B">
    <property type="entry name" value="Ribosomal_uL2_B"/>
    <property type="match status" value="1"/>
</dbReference>
<dbReference type="InterPro" id="IPR012340">
    <property type="entry name" value="NA-bd_OB-fold"/>
</dbReference>
<dbReference type="InterPro" id="IPR014722">
    <property type="entry name" value="Rib_uL2_dom2"/>
</dbReference>
<dbReference type="InterPro" id="IPR002171">
    <property type="entry name" value="Ribosomal_uL2"/>
</dbReference>
<dbReference type="InterPro" id="IPR005880">
    <property type="entry name" value="Ribosomal_uL2_bac/org-type"/>
</dbReference>
<dbReference type="InterPro" id="IPR022669">
    <property type="entry name" value="Ribosomal_uL2_C"/>
</dbReference>
<dbReference type="InterPro" id="IPR014726">
    <property type="entry name" value="Ribosomal_uL2_dom3"/>
</dbReference>
<dbReference type="InterPro" id="IPR022666">
    <property type="entry name" value="Ribosomal_uL2_RNA-bd_dom"/>
</dbReference>
<dbReference type="InterPro" id="IPR008991">
    <property type="entry name" value="Translation_prot_SH3-like_sf"/>
</dbReference>
<dbReference type="NCBIfam" id="TIGR01171">
    <property type="entry name" value="rplB_bact"/>
    <property type="match status" value="1"/>
</dbReference>
<dbReference type="PANTHER" id="PTHR13691:SF5">
    <property type="entry name" value="LARGE RIBOSOMAL SUBUNIT PROTEIN UL2M"/>
    <property type="match status" value="1"/>
</dbReference>
<dbReference type="PANTHER" id="PTHR13691">
    <property type="entry name" value="RIBOSOMAL PROTEIN L2"/>
    <property type="match status" value="1"/>
</dbReference>
<dbReference type="Pfam" id="PF00181">
    <property type="entry name" value="Ribosomal_L2"/>
    <property type="match status" value="1"/>
</dbReference>
<dbReference type="Pfam" id="PF03947">
    <property type="entry name" value="Ribosomal_L2_C"/>
    <property type="match status" value="1"/>
</dbReference>
<dbReference type="PIRSF" id="PIRSF002158">
    <property type="entry name" value="Ribosomal_L2"/>
    <property type="match status" value="1"/>
</dbReference>
<dbReference type="SMART" id="SM01383">
    <property type="entry name" value="Ribosomal_L2"/>
    <property type="match status" value="1"/>
</dbReference>
<dbReference type="SMART" id="SM01382">
    <property type="entry name" value="Ribosomal_L2_C"/>
    <property type="match status" value="1"/>
</dbReference>
<dbReference type="SUPFAM" id="SSF50249">
    <property type="entry name" value="Nucleic acid-binding proteins"/>
    <property type="match status" value="1"/>
</dbReference>
<dbReference type="SUPFAM" id="SSF50104">
    <property type="entry name" value="Translation proteins SH3-like domain"/>
    <property type="match status" value="1"/>
</dbReference>
<comment type="function">
    <text evidence="1">One of the primary rRNA binding proteins. Required for association of the 30S and 50S subunits to form the 70S ribosome, for tRNA binding and peptide bond formation. It has been suggested to have peptidyltransferase activity; this is somewhat controversial. Makes several contacts with the 16S rRNA in the 70S ribosome.</text>
</comment>
<comment type="subunit">
    <text evidence="1">Part of the 50S ribosomal subunit. Forms a bridge to the 30S subunit in the 70S ribosome.</text>
</comment>
<comment type="similarity">
    <text evidence="1">Belongs to the universal ribosomal protein uL2 family.</text>
</comment>
<reference key="1">
    <citation type="submission" date="2007-08" db="EMBL/GenBank/DDBJ databases">
        <title>Complete sequence of Thermotoga lettingae TMO.</title>
        <authorList>
            <consortium name="US DOE Joint Genome Institute"/>
            <person name="Copeland A."/>
            <person name="Lucas S."/>
            <person name="Lapidus A."/>
            <person name="Barry K."/>
            <person name="Glavina del Rio T."/>
            <person name="Dalin E."/>
            <person name="Tice H."/>
            <person name="Pitluck S."/>
            <person name="Foster B."/>
            <person name="Bruce D."/>
            <person name="Schmutz J."/>
            <person name="Larimer F."/>
            <person name="Land M."/>
            <person name="Hauser L."/>
            <person name="Kyrpides N."/>
            <person name="Mikhailova N."/>
            <person name="Nelson K."/>
            <person name="Gogarten J.P."/>
            <person name="Noll K."/>
            <person name="Richardson P."/>
        </authorList>
    </citation>
    <scope>NUCLEOTIDE SEQUENCE [LARGE SCALE GENOMIC DNA]</scope>
    <source>
        <strain>ATCC BAA-301 / DSM 14385 / NBRC 107922 / TMO</strain>
    </source>
</reference>
<name>RL2_PSELT</name>
<accession>A8F4R4</accession>
<proteinExistence type="inferred from homology"/>
<gene>
    <name evidence="1" type="primary">rplB</name>
    <name type="ordered locus">Tlet_0582</name>
</gene>
<sequence length="275" mass="30490">MGLRKYKPATPGVRFMIRNDFSGLTKKEPEKSLLVPLKKTGGRNHYGRITVRFRGGGHKRQYRLIDFKRDKIGIPAKVSAIEYDPNRSARIALLVYADGEKRYILAPNGLQVGDTVLSGIDAEIRVGNALPLENIPLGTLLHNVEIRPGSGGKIARSAGVSCQLMAKEGNYALLRMPSGELRKVHIKCYATIGVVGNEDHKNEVFGKAGRTRWIGRKPHVRGMVMNPVDHPMGGGEGRGKGQHPVTPWGMPTKGYKTRRGRRASDKFIVRRRNQV</sequence>
<feature type="chain" id="PRO_1000067546" description="Large ribosomal subunit protein uL2">
    <location>
        <begin position="1"/>
        <end position="275"/>
    </location>
</feature>
<feature type="region of interest" description="Disordered" evidence="2">
    <location>
        <begin position="236"/>
        <end position="263"/>
    </location>
</feature>
<keyword id="KW-1185">Reference proteome</keyword>
<keyword id="KW-0687">Ribonucleoprotein</keyword>
<keyword id="KW-0689">Ribosomal protein</keyword>
<keyword id="KW-0694">RNA-binding</keyword>
<keyword id="KW-0699">rRNA-binding</keyword>